<name>ATPF_ARAHI</name>
<organism>
    <name type="scientific">Arabis hirsuta</name>
    <name type="common">Hairy rock-cress</name>
    <name type="synonym">Turritis hirsuta</name>
    <dbReference type="NCBI Taxonomy" id="78191"/>
    <lineage>
        <taxon>Eukaryota</taxon>
        <taxon>Viridiplantae</taxon>
        <taxon>Streptophyta</taxon>
        <taxon>Embryophyta</taxon>
        <taxon>Tracheophyta</taxon>
        <taxon>Spermatophyta</taxon>
        <taxon>Magnoliopsida</taxon>
        <taxon>eudicotyledons</taxon>
        <taxon>Gunneridae</taxon>
        <taxon>Pentapetalae</taxon>
        <taxon>rosids</taxon>
        <taxon>malvids</taxon>
        <taxon>Brassicales</taxon>
        <taxon>Brassicaceae</taxon>
        <taxon>Arabideae</taxon>
        <taxon>Arabis</taxon>
    </lineage>
</organism>
<feature type="chain" id="PRO_0000368906" description="ATP synthase subunit b, chloroplastic">
    <location>
        <begin position="1"/>
        <end position="184"/>
    </location>
</feature>
<feature type="transmembrane region" description="Helical" evidence="1">
    <location>
        <begin position="27"/>
        <end position="49"/>
    </location>
</feature>
<keyword id="KW-0066">ATP synthesis</keyword>
<keyword id="KW-0138">CF(0)</keyword>
<keyword id="KW-0150">Chloroplast</keyword>
<keyword id="KW-0375">Hydrogen ion transport</keyword>
<keyword id="KW-0406">Ion transport</keyword>
<keyword id="KW-0472">Membrane</keyword>
<keyword id="KW-0934">Plastid</keyword>
<keyword id="KW-0793">Thylakoid</keyword>
<keyword id="KW-0812">Transmembrane</keyword>
<keyword id="KW-1133">Transmembrane helix</keyword>
<keyword id="KW-0813">Transport</keyword>
<evidence type="ECO:0000255" key="1">
    <source>
        <dbReference type="HAMAP-Rule" id="MF_01398"/>
    </source>
</evidence>
<comment type="function">
    <text evidence="1">F(1)F(0) ATP synthase produces ATP from ADP in the presence of a proton or sodium gradient. F-type ATPases consist of two structural domains, F(1) containing the extramembraneous catalytic core and F(0) containing the membrane proton channel, linked together by a central stalk and a peripheral stalk. During catalysis, ATP synthesis in the catalytic domain of F(1) is coupled via a rotary mechanism of the central stalk subunits to proton translocation.</text>
</comment>
<comment type="function">
    <text evidence="1">Component of the F(0) channel, it forms part of the peripheral stalk, linking F(1) to F(0).</text>
</comment>
<comment type="subunit">
    <text evidence="1">F-type ATPases have 2 components, F(1) - the catalytic core - and F(0) - the membrane proton channel. F(1) has five subunits: alpha(3), beta(3), gamma(1), delta(1), epsilon(1). F(0) has four main subunits: a(1), b(1), b'(1) and c(10-14). The alpha and beta chains form an alternating ring which encloses part of the gamma chain. F(1) is attached to F(0) by a central stalk formed by the gamma and epsilon chains, while a peripheral stalk is formed by the delta, b and b' chains.</text>
</comment>
<comment type="subcellular location">
    <subcellularLocation>
        <location evidence="1">Plastid</location>
        <location evidence="1">Chloroplast thylakoid membrane</location>
        <topology evidence="1">Single-pass membrane protein</topology>
    </subcellularLocation>
</comment>
<comment type="miscellaneous">
    <text>In plastids the F-type ATPase is also known as CF(1)CF(0).</text>
</comment>
<comment type="similarity">
    <text evidence="1">Belongs to the ATPase B chain family.</text>
</comment>
<gene>
    <name evidence="1" type="primary">atpF</name>
</gene>
<protein>
    <recommendedName>
        <fullName evidence="1">ATP synthase subunit b, chloroplastic</fullName>
    </recommendedName>
    <alternativeName>
        <fullName evidence="1">ATP synthase F(0) sector subunit b</fullName>
    </alternativeName>
    <alternativeName>
        <fullName evidence="1">ATPase subunit I</fullName>
    </alternativeName>
</protein>
<geneLocation type="chloroplast"/>
<accession>A4QK04</accession>
<sequence>MKNLTDSFVYLGHWPSAGSFGFNTDILATNPINLSVVFGVLIFFGKGVLNDLLDNRKQRILNTIRNSEELREGAIQQLENARIRLRKVETEADQFRVNGYSEIEREKLNLINSTYRTLKQLENYKNETILFEQQRTINQVRERVFQQALQGAIGTLNSCLSNELHLRTINANIGMFGTMKEITD</sequence>
<proteinExistence type="inferred from homology"/>
<reference key="1">
    <citation type="submission" date="2007-03" db="EMBL/GenBank/DDBJ databases">
        <title>Sequencing analysis of Arabis hirsuta chloroplast DNA.</title>
        <authorList>
            <person name="Hosouchi T."/>
            <person name="Tsuruoka H."/>
            <person name="Kotani H."/>
        </authorList>
    </citation>
    <scope>NUCLEOTIDE SEQUENCE [LARGE SCALE GENOMIC DNA]</scope>
</reference>
<dbReference type="EMBL" id="AP009369">
    <property type="protein sequence ID" value="BAF50009.1"/>
    <property type="molecule type" value="Genomic_DNA"/>
</dbReference>
<dbReference type="RefSeq" id="YP_001123185.1">
    <property type="nucleotide sequence ID" value="NC_009268.1"/>
</dbReference>
<dbReference type="SMR" id="A4QK04"/>
<dbReference type="GeneID" id="4962602"/>
<dbReference type="GO" id="GO:0009535">
    <property type="term" value="C:chloroplast thylakoid membrane"/>
    <property type="evidence" value="ECO:0007669"/>
    <property type="project" value="UniProtKB-SubCell"/>
</dbReference>
<dbReference type="GO" id="GO:0045259">
    <property type="term" value="C:proton-transporting ATP synthase complex"/>
    <property type="evidence" value="ECO:0007669"/>
    <property type="project" value="UniProtKB-KW"/>
</dbReference>
<dbReference type="GO" id="GO:0046933">
    <property type="term" value="F:proton-transporting ATP synthase activity, rotational mechanism"/>
    <property type="evidence" value="ECO:0007669"/>
    <property type="project" value="UniProtKB-UniRule"/>
</dbReference>
<dbReference type="CDD" id="cd06503">
    <property type="entry name" value="ATP-synt_Fo_b"/>
    <property type="match status" value="1"/>
</dbReference>
<dbReference type="HAMAP" id="MF_01398">
    <property type="entry name" value="ATP_synth_b_bprime"/>
    <property type="match status" value="1"/>
</dbReference>
<dbReference type="InterPro" id="IPR002146">
    <property type="entry name" value="ATP_synth_b/b'su_bac/chlpt"/>
</dbReference>
<dbReference type="PANTHER" id="PTHR34264">
    <property type="entry name" value="ATP SYNTHASE SUBUNIT B, CHLOROPLASTIC"/>
    <property type="match status" value="1"/>
</dbReference>
<dbReference type="PANTHER" id="PTHR34264:SF3">
    <property type="entry name" value="ATP SYNTHASE SUBUNIT B, CHLOROPLASTIC"/>
    <property type="match status" value="1"/>
</dbReference>
<dbReference type="Pfam" id="PF00430">
    <property type="entry name" value="ATP-synt_B"/>
    <property type="match status" value="1"/>
</dbReference>